<keyword id="KW-0008">Acetylcholine receptor inhibiting toxin</keyword>
<keyword id="KW-1015">Disulfide bond</keyword>
<keyword id="KW-0872">Ion channel impairing toxin</keyword>
<keyword id="KW-0528">Neurotoxin</keyword>
<keyword id="KW-0629">Postsynaptic neurotoxin</keyword>
<keyword id="KW-0964">Secreted</keyword>
<keyword id="KW-0732">Signal</keyword>
<keyword id="KW-0800">Toxin</keyword>
<evidence type="ECO:0000250" key="1"/>
<evidence type="ECO:0000250" key="2">
    <source>
        <dbReference type="UniProtKB" id="P0DKR6"/>
    </source>
</evidence>
<evidence type="ECO:0000250" key="3">
    <source>
        <dbReference type="UniProtKB" id="P83302"/>
    </source>
</evidence>
<evidence type="ECO:0000305" key="4"/>
<evidence type="ECO:0000312" key="5">
    <source>
        <dbReference type="EMBL" id="ABB83628.1"/>
    </source>
</evidence>
<organism>
    <name type="scientific">Ophiophagus hannah</name>
    <name type="common">King cobra</name>
    <name type="synonym">Naja hannah</name>
    <dbReference type="NCBI Taxonomy" id="8665"/>
    <lineage>
        <taxon>Eukaryota</taxon>
        <taxon>Metazoa</taxon>
        <taxon>Chordata</taxon>
        <taxon>Craniata</taxon>
        <taxon>Vertebrata</taxon>
        <taxon>Euteleostomi</taxon>
        <taxon>Lepidosauria</taxon>
        <taxon>Squamata</taxon>
        <taxon>Bifurcata</taxon>
        <taxon>Unidentata</taxon>
        <taxon>Episquamata</taxon>
        <taxon>Toxicofera</taxon>
        <taxon>Serpentes</taxon>
        <taxon>Colubroidea</taxon>
        <taxon>Elapidae</taxon>
        <taxon>Elapinae</taxon>
        <taxon>Ophiophagus</taxon>
    </lineage>
</organism>
<comment type="function">
    <text evidence="3">This three-finger toxin binds and inhibits the nicotinic acetylcholine receptor (nAChR).</text>
</comment>
<comment type="subcellular location">
    <subcellularLocation>
        <location evidence="1">Secreted</location>
    </subcellularLocation>
</comment>
<comment type="tissue specificity">
    <text evidence="4">Expressed by the venom gland.</text>
</comment>
<comment type="miscellaneous">
    <text evidence="4">Is classified as a P-type cytotoxin, since a proline residue stands at position 49 (Pro-31 in standard classification).</text>
</comment>
<comment type="similarity">
    <text evidence="4">Belongs to the three-finger toxin family. Short-chain subfamily.</text>
</comment>
<name>3SXB_OPHHA</name>
<accession>Q2VBP1</accession>
<sequence length="78" mass="8931">MKTLLLTFLVVTIVCLDLGYTLICHRVHGLQTCEPDQKFCFRKTTMFFPNHPVLLMGCTYSCPTEKYSVCCSTDKCNK</sequence>
<feature type="signal peptide" evidence="1">
    <location>
        <begin position="1"/>
        <end position="21"/>
    </location>
</feature>
<feature type="chain" id="PRO_5000006484" description="Short neurotoxin SNTX11">
    <location>
        <begin position="22"/>
        <end position="78"/>
    </location>
</feature>
<feature type="site" description="Important residue for inhibition of muscle alpha-1-beta-1-delta-epsilon (CHRNA1-CHRNB1-CHRND-CHRNE) and neuronal alpha-3-beta-2/CHRNA3-CHRNB2 nAChR" evidence="3">
    <location>
        <position position="28"/>
    </location>
</feature>
<feature type="site" description="Important residue for inhibition of muscle alpha-1-beta-1-delta-epsilon (CHRNA1-CHRNB1-CHRND-CHRNE) and neuronal alpha-3-beta-2/CHRNA3-CHRNB2 nAChR" evidence="3">
    <location>
        <position position="43"/>
    </location>
</feature>
<feature type="site" description="Key residue for inhibition of muscle alpha-1-beta-1-delta-epsilon (CHRNA1-CHRNB1-CHRND-CHRNE) nAChR" evidence="3">
    <location>
        <position position="44"/>
    </location>
</feature>
<feature type="site" description="Important residue for inhibition of muscle alpha-1-beta-1-delta-epsilon (CHRNA1-CHRNB1-CHRND-CHRNE) nAChR" evidence="3">
    <location>
        <position position="45"/>
    </location>
</feature>
<feature type="site" description="Key residue for inhibition of muscle alpha-1-beta-1-delta-epsilon (CHRNA1-CHRNB1-CHRND-CHRNE) and important for inhibition of neuronal alpha-3-beta-2/CHRNA3-CHRNB2 nAChR" evidence="3">
    <location>
        <position position="46"/>
    </location>
</feature>
<feature type="site" description="Important residue for inhibition of muscle alpha-1-beta-1-delta-epsilon (CHRNA1-CHRNB1-CHRND-CHRNE) nAChR" evidence="3">
    <location>
        <position position="47"/>
    </location>
</feature>
<feature type="site" description="Key residue for inhibition of muscle alpha-1-beta-1-delta-epsilon (CHRNA1-CHRNB1-CHRND-CHRNE) and important residue for inhibition of neuronal alpha-3-beta-2/CHRNA3-CHRNB2 nAChR" evidence="3">
    <location>
        <position position="48"/>
    </location>
</feature>
<feature type="site" description="Important residue for inhibition of muscle alpha-1-beta-1-delta-epsilon (CHRNA1-CHRNB1-CHRND-CHRNE) and neuronal alpha-3-beta-2/CHRNA3-CHRNB2 nAChR" evidence="3">
    <location>
        <position position="51"/>
    </location>
</feature>
<feature type="site" description="Important residue for inhibition of muscle alpha-1-beta-1-delta-epsilon (CHRNA1-CHRNB1-CHRND-CHRNE) and neuronal alpha-3-beta-2/CHRNA3-CHRNB2 nAChR" evidence="3">
    <location>
        <position position="66"/>
    </location>
</feature>
<feature type="site" description="Important residue for interaction with muscle alpha-1-beta-1-delta-epsilon (CHRNA1-CHRNB1-CHRND-CHRNE) and neuronal alpha-3-beta-2/CHRNA3-CHRNB2 nAChR" evidence="3">
    <location>
        <position position="67"/>
    </location>
</feature>
<feature type="disulfide bond" evidence="2">
    <location>
        <begin position="24"/>
        <end position="40"/>
    </location>
</feature>
<feature type="disulfide bond" evidence="2">
    <location>
        <begin position="33"/>
        <end position="58"/>
    </location>
</feature>
<feature type="disulfide bond" evidence="2">
    <location>
        <begin position="62"/>
        <end position="70"/>
    </location>
</feature>
<feature type="disulfide bond" evidence="2">
    <location>
        <begin position="71"/>
        <end position="76"/>
    </location>
</feature>
<proteinExistence type="inferred from homology"/>
<reference key="1">
    <citation type="journal article" date="2006" name="Biochem. J.">
        <title>Novel genes encoding six kinds of three-finger toxins in Ophiophagus hannah (king cobra) and function characterization of two recombinant long-chain neurotoxins.</title>
        <authorList>
            <person name="Li J."/>
            <person name="Zhang H."/>
            <person name="Liu J."/>
            <person name="Xu K."/>
        </authorList>
    </citation>
    <scope>NUCLEOTIDE SEQUENCE [MRNA]</scope>
    <source>
        <tissue>Venom gland</tissue>
    </source>
</reference>
<dbReference type="EMBL" id="DQ273574">
    <property type="protein sequence ID" value="ABB83628.1"/>
    <property type="molecule type" value="mRNA"/>
</dbReference>
<dbReference type="SMR" id="Q2VBP1"/>
<dbReference type="GO" id="GO:0005576">
    <property type="term" value="C:extracellular region"/>
    <property type="evidence" value="ECO:0007669"/>
    <property type="project" value="UniProtKB-SubCell"/>
</dbReference>
<dbReference type="GO" id="GO:0030550">
    <property type="term" value="F:acetylcholine receptor inhibitor activity"/>
    <property type="evidence" value="ECO:0007669"/>
    <property type="project" value="UniProtKB-KW"/>
</dbReference>
<dbReference type="GO" id="GO:0099106">
    <property type="term" value="F:ion channel regulator activity"/>
    <property type="evidence" value="ECO:0007669"/>
    <property type="project" value="UniProtKB-KW"/>
</dbReference>
<dbReference type="GO" id="GO:0090729">
    <property type="term" value="F:toxin activity"/>
    <property type="evidence" value="ECO:0007669"/>
    <property type="project" value="UniProtKB-KW"/>
</dbReference>
<dbReference type="CDD" id="cd00206">
    <property type="entry name" value="TFP_snake_toxin"/>
    <property type="match status" value="1"/>
</dbReference>
<dbReference type="Gene3D" id="2.10.60.10">
    <property type="entry name" value="CD59"/>
    <property type="match status" value="1"/>
</dbReference>
<dbReference type="InterPro" id="IPR003571">
    <property type="entry name" value="Snake_3FTx"/>
</dbReference>
<dbReference type="InterPro" id="IPR045860">
    <property type="entry name" value="Snake_toxin-like_sf"/>
</dbReference>
<dbReference type="InterPro" id="IPR054131">
    <property type="entry name" value="Toxin_cobra-type"/>
</dbReference>
<dbReference type="Pfam" id="PF21947">
    <property type="entry name" value="Toxin_cobra-type"/>
    <property type="match status" value="1"/>
</dbReference>
<dbReference type="SUPFAM" id="SSF57302">
    <property type="entry name" value="Snake toxin-like"/>
    <property type="match status" value="1"/>
</dbReference>
<protein>
    <recommendedName>
        <fullName evidence="5">Short neurotoxin SNTX11</fullName>
    </recommendedName>
    <alternativeName>
        <fullName>Three-finger toxin</fullName>
        <shortName>3FTx</shortName>
    </alternativeName>
</protein>